<reference key="1">
    <citation type="journal article" date="2011" name="Stand. Genomic Sci.">
        <title>Complete genome sequence of Rhodospirillum rubrum type strain (S1).</title>
        <authorList>
            <person name="Munk A.C."/>
            <person name="Copeland A."/>
            <person name="Lucas S."/>
            <person name="Lapidus A."/>
            <person name="Del Rio T.G."/>
            <person name="Barry K."/>
            <person name="Detter J.C."/>
            <person name="Hammon N."/>
            <person name="Israni S."/>
            <person name="Pitluck S."/>
            <person name="Brettin T."/>
            <person name="Bruce D."/>
            <person name="Han C."/>
            <person name="Tapia R."/>
            <person name="Gilna P."/>
            <person name="Schmutz J."/>
            <person name="Larimer F."/>
            <person name="Land M."/>
            <person name="Kyrpides N.C."/>
            <person name="Mavromatis K."/>
            <person name="Richardson P."/>
            <person name="Rohde M."/>
            <person name="Goeker M."/>
            <person name="Klenk H.P."/>
            <person name="Zhang Y."/>
            <person name="Roberts G.P."/>
            <person name="Reslewic S."/>
            <person name="Schwartz D.C."/>
        </authorList>
    </citation>
    <scope>NUCLEOTIDE SEQUENCE [LARGE SCALE GENOMIC DNA]</scope>
    <source>
        <strain>ATCC 11170 / ATH 1.1.1 / DSM 467 / LMG 4362 / NCIMB 8255 / S1</strain>
    </source>
</reference>
<dbReference type="EC" id="7.4.2.11" evidence="1"/>
<dbReference type="EMBL" id="CP000230">
    <property type="protein sequence ID" value="ABC21592.1"/>
    <property type="molecule type" value="Genomic_DNA"/>
</dbReference>
<dbReference type="RefSeq" id="WP_011388546.1">
    <property type="nucleotide sequence ID" value="NC_007643.1"/>
</dbReference>
<dbReference type="RefSeq" id="YP_425879.1">
    <property type="nucleotide sequence ID" value="NC_007643.1"/>
</dbReference>
<dbReference type="SMR" id="Q2RWA3"/>
<dbReference type="STRING" id="269796.Rru_A0788"/>
<dbReference type="EnsemblBacteria" id="ABC21592">
    <property type="protein sequence ID" value="ABC21592"/>
    <property type="gene ID" value="Rru_A0788"/>
</dbReference>
<dbReference type="KEGG" id="rru:Rru_A0788"/>
<dbReference type="PATRIC" id="fig|269796.9.peg.841"/>
<dbReference type="eggNOG" id="COG1135">
    <property type="taxonomic scope" value="Bacteria"/>
</dbReference>
<dbReference type="HOGENOM" id="CLU_000604_1_3_5"/>
<dbReference type="PhylomeDB" id="Q2RWA3"/>
<dbReference type="Proteomes" id="UP000001929">
    <property type="component" value="Chromosome"/>
</dbReference>
<dbReference type="GO" id="GO:0005886">
    <property type="term" value="C:plasma membrane"/>
    <property type="evidence" value="ECO:0007669"/>
    <property type="project" value="UniProtKB-SubCell"/>
</dbReference>
<dbReference type="GO" id="GO:0033232">
    <property type="term" value="F:ABC-type D-methionine transporter activity"/>
    <property type="evidence" value="ECO:0007669"/>
    <property type="project" value="UniProtKB-EC"/>
</dbReference>
<dbReference type="GO" id="GO:0005524">
    <property type="term" value="F:ATP binding"/>
    <property type="evidence" value="ECO:0007669"/>
    <property type="project" value="UniProtKB-KW"/>
</dbReference>
<dbReference type="GO" id="GO:0016887">
    <property type="term" value="F:ATP hydrolysis activity"/>
    <property type="evidence" value="ECO:0007669"/>
    <property type="project" value="InterPro"/>
</dbReference>
<dbReference type="CDD" id="cd03258">
    <property type="entry name" value="ABC_MetN_methionine_transporter"/>
    <property type="match status" value="1"/>
</dbReference>
<dbReference type="FunFam" id="3.40.50.300:FF:000056">
    <property type="entry name" value="Cell division ATP-binding protein FtsE"/>
    <property type="match status" value="1"/>
</dbReference>
<dbReference type="Gene3D" id="3.30.70.260">
    <property type="match status" value="1"/>
</dbReference>
<dbReference type="Gene3D" id="3.40.50.300">
    <property type="entry name" value="P-loop containing nucleotide triphosphate hydrolases"/>
    <property type="match status" value="1"/>
</dbReference>
<dbReference type="InterPro" id="IPR003593">
    <property type="entry name" value="AAA+_ATPase"/>
</dbReference>
<dbReference type="InterPro" id="IPR003439">
    <property type="entry name" value="ABC_transporter-like_ATP-bd"/>
</dbReference>
<dbReference type="InterPro" id="IPR017871">
    <property type="entry name" value="ABC_transporter-like_CS"/>
</dbReference>
<dbReference type="InterPro" id="IPR045865">
    <property type="entry name" value="ACT-like_dom_sf"/>
</dbReference>
<dbReference type="InterPro" id="IPR041701">
    <property type="entry name" value="MetN_ABC"/>
</dbReference>
<dbReference type="InterPro" id="IPR050086">
    <property type="entry name" value="MetN_ABC_transporter-like"/>
</dbReference>
<dbReference type="InterPro" id="IPR018449">
    <property type="entry name" value="NIL_domain"/>
</dbReference>
<dbReference type="InterPro" id="IPR027417">
    <property type="entry name" value="P-loop_NTPase"/>
</dbReference>
<dbReference type="PANTHER" id="PTHR43166">
    <property type="entry name" value="AMINO ACID IMPORT ATP-BINDING PROTEIN"/>
    <property type="match status" value="1"/>
</dbReference>
<dbReference type="PANTHER" id="PTHR43166:SF30">
    <property type="entry name" value="METHIONINE IMPORT ATP-BINDING PROTEIN METN"/>
    <property type="match status" value="1"/>
</dbReference>
<dbReference type="Pfam" id="PF00005">
    <property type="entry name" value="ABC_tran"/>
    <property type="match status" value="1"/>
</dbReference>
<dbReference type="Pfam" id="PF09383">
    <property type="entry name" value="NIL"/>
    <property type="match status" value="1"/>
</dbReference>
<dbReference type="SMART" id="SM00382">
    <property type="entry name" value="AAA"/>
    <property type="match status" value="1"/>
</dbReference>
<dbReference type="SMART" id="SM00930">
    <property type="entry name" value="NIL"/>
    <property type="match status" value="1"/>
</dbReference>
<dbReference type="SUPFAM" id="SSF55021">
    <property type="entry name" value="ACT-like"/>
    <property type="match status" value="1"/>
</dbReference>
<dbReference type="SUPFAM" id="SSF52540">
    <property type="entry name" value="P-loop containing nucleoside triphosphate hydrolases"/>
    <property type="match status" value="1"/>
</dbReference>
<dbReference type="PROSITE" id="PS00211">
    <property type="entry name" value="ABC_TRANSPORTER_1"/>
    <property type="match status" value="1"/>
</dbReference>
<dbReference type="PROSITE" id="PS50893">
    <property type="entry name" value="ABC_TRANSPORTER_2"/>
    <property type="match status" value="1"/>
</dbReference>
<dbReference type="PROSITE" id="PS51264">
    <property type="entry name" value="METN"/>
    <property type="match status" value="1"/>
</dbReference>
<gene>
    <name evidence="1" type="primary">metN</name>
    <name type="ordered locus">Rru_A0788</name>
</gene>
<comment type="function">
    <text evidence="1">Part of the ABC transporter complex MetNIQ involved in methionine import. Responsible for energy coupling to the transport system.</text>
</comment>
<comment type="catalytic activity">
    <reaction evidence="1">
        <text>L-methionine(out) + ATP + H2O = L-methionine(in) + ADP + phosphate + H(+)</text>
        <dbReference type="Rhea" id="RHEA:29779"/>
        <dbReference type="ChEBI" id="CHEBI:15377"/>
        <dbReference type="ChEBI" id="CHEBI:15378"/>
        <dbReference type="ChEBI" id="CHEBI:30616"/>
        <dbReference type="ChEBI" id="CHEBI:43474"/>
        <dbReference type="ChEBI" id="CHEBI:57844"/>
        <dbReference type="ChEBI" id="CHEBI:456216"/>
        <dbReference type="EC" id="7.4.2.11"/>
    </reaction>
</comment>
<comment type="catalytic activity">
    <reaction evidence="1">
        <text>D-methionine(out) + ATP + H2O = D-methionine(in) + ADP + phosphate + H(+)</text>
        <dbReference type="Rhea" id="RHEA:29767"/>
        <dbReference type="ChEBI" id="CHEBI:15377"/>
        <dbReference type="ChEBI" id="CHEBI:15378"/>
        <dbReference type="ChEBI" id="CHEBI:30616"/>
        <dbReference type="ChEBI" id="CHEBI:43474"/>
        <dbReference type="ChEBI" id="CHEBI:57932"/>
        <dbReference type="ChEBI" id="CHEBI:456216"/>
        <dbReference type="EC" id="7.4.2.11"/>
    </reaction>
</comment>
<comment type="subunit">
    <text evidence="1">The complex is composed of two ATP-binding proteins (MetN), two transmembrane proteins (MetI) and a solute-binding protein (MetQ).</text>
</comment>
<comment type="subcellular location">
    <subcellularLocation>
        <location evidence="1">Cell inner membrane</location>
        <topology evidence="1">Peripheral membrane protein</topology>
    </subcellularLocation>
</comment>
<comment type="similarity">
    <text evidence="1">Belongs to the ABC transporter superfamily. Methionine importer (TC 3.A.1.24) family.</text>
</comment>
<proteinExistence type="inferred from homology"/>
<feature type="chain" id="PRO_0000270374" description="Methionine import ATP-binding protein MetN">
    <location>
        <begin position="1"/>
        <end position="351"/>
    </location>
</feature>
<feature type="domain" description="ABC transporter" evidence="1">
    <location>
        <begin position="2"/>
        <end position="241"/>
    </location>
</feature>
<feature type="binding site" evidence="1">
    <location>
        <begin position="38"/>
        <end position="45"/>
    </location>
    <ligand>
        <name>ATP</name>
        <dbReference type="ChEBI" id="CHEBI:30616"/>
    </ligand>
</feature>
<keyword id="KW-0029">Amino-acid transport</keyword>
<keyword id="KW-0067">ATP-binding</keyword>
<keyword id="KW-0997">Cell inner membrane</keyword>
<keyword id="KW-1003">Cell membrane</keyword>
<keyword id="KW-0472">Membrane</keyword>
<keyword id="KW-0547">Nucleotide-binding</keyword>
<keyword id="KW-1185">Reference proteome</keyword>
<keyword id="KW-1278">Translocase</keyword>
<keyword id="KW-0813">Transport</keyword>
<name>METN_RHORT</name>
<evidence type="ECO:0000255" key="1">
    <source>
        <dbReference type="HAMAP-Rule" id="MF_01719"/>
    </source>
</evidence>
<protein>
    <recommendedName>
        <fullName evidence="1">Methionine import ATP-binding protein MetN</fullName>
        <ecNumber evidence="1">7.4.2.11</ecNumber>
    </recommendedName>
</protein>
<accession>Q2RWA3</accession>
<organism>
    <name type="scientific">Rhodospirillum rubrum (strain ATCC 11170 / ATH 1.1.1 / DSM 467 / LMG 4362 / NCIMB 8255 / S1)</name>
    <dbReference type="NCBI Taxonomy" id="269796"/>
    <lineage>
        <taxon>Bacteria</taxon>
        <taxon>Pseudomonadati</taxon>
        <taxon>Pseudomonadota</taxon>
        <taxon>Alphaproteobacteria</taxon>
        <taxon>Rhodospirillales</taxon>
        <taxon>Rhodospirillaceae</taxon>
        <taxon>Rhodospirillum</taxon>
    </lineage>
</organism>
<sequence length="351" mass="38082">MIVTEALTKAFSGPFGAIEVLRGIDLEIAKSEVFGVIGRSGAGKSTLVRCLNLLERPTGGRVWVGGRELTSFDERSLRQARRDIGMIFQHFNVLSSRTAADNIALPLELVGLPGPVIRRRVAELLDLVGLTDKGEAYPAELSGGQKQRVGIARALASKPSVLLCDEATSALDPETTKSILALLKDINRRLGLTIVLITHEMHVIKDIADRVAVLDHGRVVEQGRVFDVFTDPQHAVTRAFVHEVLNRDLPEVLVPRLATTRLEGGPVIWRITFTGPSANDPVVSEMVRRFGLSFNILYGHIDYIQGLPYGTLVVEAAGTESARHAALAYLSQKNLSVEVLGHVATPDPVTA</sequence>